<name>IF5A_SULTO</name>
<comment type="function">
    <text evidence="1">Functions by promoting the formation of the first peptide bond.</text>
</comment>
<comment type="subcellular location">
    <subcellularLocation>
        <location evidence="1">Cytoplasm</location>
    </subcellularLocation>
</comment>
<comment type="similarity">
    <text evidence="1">Belongs to the eIF-5A family.</text>
</comment>
<sequence length="131" mass="14561">MSIQYTTVGDLKVGNYVVIDGEPCRVVEISKAKTGKHGSAKANIVAIGLFTGQKRTLMAPVDQQVEVPIIEKHIGQILADKGDTITIMDMENYETFDIEKPTDADIVDKIRPGAEVEYWEIMGRKKIVRVK</sequence>
<dbReference type="EMBL" id="BA000023">
    <property type="protein sequence ID" value="BAB66340.1"/>
    <property type="molecule type" value="Genomic_DNA"/>
</dbReference>
<dbReference type="RefSeq" id="WP_010979318.1">
    <property type="nucleotide sequence ID" value="NC_003106.2"/>
</dbReference>
<dbReference type="SMR" id="Q971T0"/>
<dbReference type="STRING" id="273063.STK_12960"/>
<dbReference type="KEGG" id="sto:STK_12960"/>
<dbReference type="PATRIC" id="fig|273063.9.peg.1457"/>
<dbReference type="eggNOG" id="arCOG04277">
    <property type="taxonomic scope" value="Archaea"/>
</dbReference>
<dbReference type="OrthoDB" id="23689at2157"/>
<dbReference type="Proteomes" id="UP000001015">
    <property type="component" value="Chromosome"/>
</dbReference>
<dbReference type="GO" id="GO:0005737">
    <property type="term" value="C:cytoplasm"/>
    <property type="evidence" value="ECO:0007669"/>
    <property type="project" value="UniProtKB-SubCell"/>
</dbReference>
<dbReference type="GO" id="GO:0043022">
    <property type="term" value="F:ribosome binding"/>
    <property type="evidence" value="ECO:0007669"/>
    <property type="project" value="InterPro"/>
</dbReference>
<dbReference type="GO" id="GO:0003723">
    <property type="term" value="F:RNA binding"/>
    <property type="evidence" value="ECO:0007669"/>
    <property type="project" value="InterPro"/>
</dbReference>
<dbReference type="GO" id="GO:0003746">
    <property type="term" value="F:translation elongation factor activity"/>
    <property type="evidence" value="ECO:0007669"/>
    <property type="project" value="InterPro"/>
</dbReference>
<dbReference type="GO" id="GO:0003743">
    <property type="term" value="F:translation initiation factor activity"/>
    <property type="evidence" value="ECO:0007669"/>
    <property type="project" value="UniProtKB-UniRule"/>
</dbReference>
<dbReference type="GO" id="GO:0045901">
    <property type="term" value="P:positive regulation of translational elongation"/>
    <property type="evidence" value="ECO:0007669"/>
    <property type="project" value="InterPro"/>
</dbReference>
<dbReference type="GO" id="GO:0045905">
    <property type="term" value="P:positive regulation of translational termination"/>
    <property type="evidence" value="ECO:0007669"/>
    <property type="project" value="InterPro"/>
</dbReference>
<dbReference type="CDD" id="cd04467">
    <property type="entry name" value="S1_aIF5A"/>
    <property type="match status" value="1"/>
</dbReference>
<dbReference type="FunFam" id="2.30.30.30:FF:000038">
    <property type="entry name" value="Translation initiation factor 5A"/>
    <property type="match status" value="1"/>
</dbReference>
<dbReference type="FunFam" id="2.40.50.140:FF:000334">
    <property type="entry name" value="Translation initiation factor 5A"/>
    <property type="match status" value="1"/>
</dbReference>
<dbReference type="Gene3D" id="2.30.30.30">
    <property type="match status" value="1"/>
</dbReference>
<dbReference type="Gene3D" id="2.40.50.140">
    <property type="entry name" value="Nucleic acid-binding proteins"/>
    <property type="match status" value="1"/>
</dbReference>
<dbReference type="HAMAP" id="MF_00085">
    <property type="entry name" value="eIF_5A"/>
    <property type="match status" value="1"/>
</dbReference>
<dbReference type="InterPro" id="IPR001884">
    <property type="entry name" value="IF5A-like"/>
</dbReference>
<dbReference type="InterPro" id="IPR048670">
    <property type="entry name" value="IF5A-like_N"/>
</dbReference>
<dbReference type="InterPro" id="IPR012340">
    <property type="entry name" value="NA-bd_OB-fold"/>
</dbReference>
<dbReference type="InterPro" id="IPR014722">
    <property type="entry name" value="Rib_uL2_dom2"/>
</dbReference>
<dbReference type="InterPro" id="IPR019769">
    <property type="entry name" value="Trans_elong_IF5A_hypusine_site"/>
</dbReference>
<dbReference type="InterPro" id="IPR022847">
    <property type="entry name" value="Transl_elong_IF5A_arc"/>
</dbReference>
<dbReference type="InterPro" id="IPR020189">
    <property type="entry name" value="Transl_elong_IF5A_C"/>
</dbReference>
<dbReference type="InterPro" id="IPR008991">
    <property type="entry name" value="Translation_prot_SH3-like_sf"/>
</dbReference>
<dbReference type="NCBIfam" id="TIGR00037">
    <property type="entry name" value="eIF_5A"/>
    <property type="match status" value="1"/>
</dbReference>
<dbReference type="NCBIfam" id="NF003076">
    <property type="entry name" value="PRK03999.1"/>
    <property type="match status" value="1"/>
</dbReference>
<dbReference type="PANTHER" id="PTHR11673">
    <property type="entry name" value="TRANSLATION INITIATION FACTOR 5A FAMILY MEMBER"/>
    <property type="match status" value="1"/>
</dbReference>
<dbReference type="Pfam" id="PF01287">
    <property type="entry name" value="eIF-5a"/>
    <property type="match status" value="1"/>
</dbReference>
<dbReference type="Pfam" id="PF21485">
    <property type="entry name" value="IF5A-like_N"/>
    <property type="match status" value="1"/>
</dbReference>
<dbReference type="PIRSF" id="PIRSF003025">
    <property type="entry name" value="eIF5A"/>
    <property type="match status" value="1"/>
</dbReference>
<dbReference type="SMART" id="SM01376">
    <property type="entry name" value="eIF-5a"/>
    <property type="match status" value="1"/>
</dbReference>
<dbReference type="SUPFAM" id="SSF50249">
    <property type="entry name" value="Nucleic acid-binding proteins"/>
    <property type="match status" value="1"/>
</dbReference>
<dbReference type="SUPFAM" id="SSF50104">
    <property type="entry name" value="Translation proteins SH3-like domain"/>
    <property type="match status" value="1"/>
</dbReference>
<dbReference type="PROSITE" id="PS00302">
    <property type="entry name" value="IF5A_HYPUSINE"/>
    <property type="match status" value="1"/>
</dbReference>
<accession>Q971T0</accession>
<feature type="chain" id="PRO_0000142505" description="Translation initiation factor 5A">
    <location>
        <begin position="1"/>
        <end position="131"/>
    </location>
</feature>
<feature type="modified residue" description="Hypusine" evidence="1">
    <location>
        <position position="36"/>
    </location>
</feature>
<proteinExistence type="inferred from homology"/>
<reference key="1">
    <citation type="journal article" date="2001" name="DNA Res.">
        <title>Complete genome sequence of an aerobic thermoacidophilic Crenarchaeon, Sulfolobus tokodaii strain7.</title>
        <authorList>
            <person name="Kawarabayasi Y."/>
            <person name="Hino Y."/>
            <person name="Horikawa H."/>
            <person name="Jin-no K."/>
            <person name="Takahashi M."/>
            <person name="Sekine M."/>
            <person name="Baba S."/>
            <person name="Ankai A."/>
            <person name="Kosugi H."/>
            <person name="Hosoyama A."/>
            <person name="Fukui S."/>
            <person name="Nagai Y."/>
            <person name="Nishijima K."/>
            <person name="Otsuka R."/>
            <person name="Nakazawa H."/>
            <person name="Takamiya M."/>
            <person name="Kato Y."/>
            <person name="Yoshizawa T."/>
            <person name="Tanaka T."/>
            <person name="Kudoh Y."/>
            <person name="Yamazaki J."/>
            <person name="Kushida N."/>
            <person name="Oguchi A."/>
            <person name="Aoki K."/>
            <person name="Masuda S."/>
            <person name="Yanagii M."/>
            <person name="Nishimura M."/>
            <person name="Yamagishi A."/>
            <person name="Oshima T."/>
            <person name="Kikuchi H."/>
        </authorList>
    </citation>
    <scope>NUCLEOTIDE SEQUENCE [LARGE SCALE GENOMIC DNA]</scope>
    <source>
        <strain>DSM 16993 / JCM 10545 / NBRC 100140 / 7</strain>
    </source>
</reference>
<protein>
    <recommendedName>
        <fullName evidence="1">Translation initiation factor 5A</fullName>
    </recommendedName>
    <alternativeName>
        <fullName evidence="1">Hypusine-containing protein</fullName>
    </alternativeName>
    <alternativeName>
        <fullName evidence="1">eIF-5A</fullName>
    </alternativeName>
</protein>
<gene>
    <name evidence="1" type="primary">eif5a</name>
    <name type="ordered locus">STK_12960</name>
</gene>
<keyword id="KW-0963">Cytoplasm</keyword>
<keyword id="KW-0385">Hypusine</keyword>
<keyword id="KW-0396">Initiation factor</keyword>
<keyword id="KW-0648">Protein biosynthesis</keyword>
<keyword id="KW-1185">Reference proteome</keyword>
<evidence type="ECO:0000255" key="1">
    <source>
        <dbReference type="HAMAP-Rule" id="MF_00085"/>
    </source>
</evidence>
<organism>
    <name type="scientific">Sulfurisphaera tokodaii (strain DSM 16993 / JCM 10545 / NBRC 100140 / 7)</name>
    <name type="common">Sulfolobus tokodaii</name>
    <dbReference type="NCBI Taxonomy" id="273063"/>
    <lineage>
        <taxon>Archaea</taxon>
        <taxon>Thermoproteota</taxon>
        <taxon>Thermoprotei</taxon>
        <taxon>Sulfolobales</taxon>
        <taxon>Sulfolobaceae</taxon>
        <taxon>Sulfurisphaera</taxon>
    </lineage>
</organism>